<reference key="1">
    <citation type="journal article" date="2007" name="PLoS Genet.">
        <title>Patterns and implications of gene gain and loss in the evolution of Prochlorococcus.</title>
        <authorList>
            <person name="Kettler G.C."/>
            <person name="Martiny A.C."/>
            <person name="Huang K."/>
            <person name="Zucker J."/>
            <person name="Coleman M.L."/>
            <person name="Rodrigue S."/>
            <person name="Chen F."/>
            <person name="Lapidus A."/>
            <person name="Ferriera S."/>
            <person name="Johnson J."/>
            <person name="Steglich C."/>
            <person name="Church G.M."/>
            <person name="Richardson P."/>
            <person name="Chisholm S.W."/>
        </authorList>
    </citation>
    <scope>NUCLEOTIDE SEQUENCE [LARGE SCALE GENOMIC DNA]</scope>
    <source>
        <strain>AS9601</strain>
    </source>
</reference>
<evidence type="ECO:0000255" key="1">
    <source>
        <dbReference type="HAMAP-Rule" id="MF_02101"/>
    </source>
</evidence>
<organism>
    <name type="scientific">Prochlorococcus marinus (strain AS9601)</name>
    <dbReference type="NCBI Taxonomy" id="146891"/>
    <lineage>
        <taxon>Bacteria</taxon>
        <taxon>Bacillati</taxon>
        <taxon>Cyanobacteriota</taxon>
        <taxon>Cyanophyceae</taxon>
        <taxon>Synechococcales</taxon>
        <taxon>Prochlorococcaceae</taxon>
        <taxon>Prochlorococcus</taxon>
    </lineage>
</organism>
<protein>
    <recommendedName>
        <fullName evidence="1">1,4-dihydroxy-2-naphthoyl-CoA hydrolase</fullName>
        <shortName evidence="1">DHNA-CoA hydrolase</shortName>
        <ecNumber evidence="1">3.1.2.28</ecNumber>
    </recommendedName>
    <alternativeName>
        <fullName evidence="1">DHNA-CoA thioesterase</fullName>
    </alternativeName>
</protein>
<name>DNCH_PROMS</name>
<sequence length="150" mass="17240">MKPADWLILQKKVRFGDCDSAGVIHFHNLLKWSHEAWEESIEIYGIPSQDIFPDFSIRKSQIIFPIVNCEANFLAPIKIGDLLKVKIVPHKINTHLFQVNSFFIKNGNKVAEGKIIHCSLDIDSRDKIELPDQLERWIEASNVSTNLKEC</sequence>
<feature type="chain" id="PRO_0000377016" description="1,4-dihydroxy-2-naphthoyl-CoA hydrolase">
    <location>
        <begin position="1"/>
        <end position="150"/>
    </location>
</feature>
<feature type="active site" evidence="1">
    <location>
        <position position="19"/>
    </location>
</feature>
<keyword id="KW-0378">Hydrolase</keyword>
<gene>
    <name type="ordered locus">A9601_01911</name>
</gene>
<accession>A2BNW8</accession>
<proteinExistence type="inferred from homology"/>
<dbReference type="EC" id="3.1.2.28" evidence="1"/>
<dbReference type="EMBL" id="CP000551">
    <property type="protein sequence ID" value="ABM69479.1"/>
    <property type="molecule type" value="Genomic_DNA"/>
</dbReference>
<dbReference type="RefSeq" id="WP_011817666.1">
    <property type="nucleotide sequence ID" value="NC_008816.1"/>
</dbReference>
<dbReference type="SMR" id="A2BNW8"/>
<dbReference type="STRING" id="146891.A9601_01911"/>
<dbReference type="KEGG" id="pmb:A9601_01911"/>
<dbReference type="eggNOG" id="COG0824">
    <property type="taxonomic scope" value="Bacteria"/>
</dbReference>
<dbReference type="HOGENOM" id="CLU_101141_5_3_3"/>
<dbReference type="OrthoDB" id="9800856at2"/>
<dbReference type="UniPathway" id="UPA00995"/>
<dbReference type="UniPathway" id="UPA01057">
    <property type="reaction ID" value="UER01033"/>
</dbReference>
<dbReference type="Proteomes" id="UP000002590">
    <property type="component" value="Chromosome"/>
</dbReference>
<dbReference type="GO" id="GO:0061522">
    <property type="term" value="F:1,4-dihydroxy-2-naphthoyl-CoA thioesterase activity"/>
    <property type="evidence" value="ECO:0007669"/>
    <property type="project" value="UniProtKB-EC"/>
</dbReference>
<dbReference type="GO" id="GO:0042372">
    <property type="term" value="P:phylloquinone biosynthetic process"/>
    <property type="evidence" value="ECO:0007669"/>
    <property type="project" value="UniProtKB-UniRule"/>
</dbReference>
<dbReference type="CDD" id="cd00586">
    <property type="entry name" value="4HBT"/>
    <property type="match status" value="1"/>
</dbReference>
<dbReference type="Gene3D" id="3.10.129.10">
    <property type="entry name" value="Hotdog Thioesterase"/>
    <property type="match status" value="1"/>
</dbReference>
<dbReference type="HAMAP" id="MF_02101">
    <property type="entry name" value="DHNA_CoA_hydrolase"/>
    <property type="match status" value="1"/>
</dbReference>
<dbReference type="InterPro" id="IPR022829">
    <property type="entry name" value="DHNA_CoA_hydrolase"/>
</dbReference>
<dbReference type="InterPro" id="IPR029069">
    <property type="entry name" value="HotDog_dom_sf"/>
</dbReference>
<dbReference type="Pfam" id="PF13279">
    <property type="entry name" value="4HBT_2"/>
    <property type="match status" value="1"/>
</dbReference>
<dbReference type="SUPFAM" id="SSF54637">
    <property type="entry name" value="Thioesterase/thiol ester dehydrase-isomerase"/>
    <property type="match status" value="1"/>
</dbReference>
<comment type="function">
    <text evidence="1">Catalyzes the hydrolysis of 1,4-dihydroxy-2-naphthoyl-CoA (DHNA-CoA) to 1,4-dihydroxy-2-naphthoate (DHNA), a reaction involved in phylloquinone (vitamin K1) biosynthesis.</text>
</comment>
<comment type="catalytic activity">
    <reaction evidence="1">
        <text>1,4-dihydroxy-2-naphthoyl-CoA + H2O = 1,4-dihydroxy-2-naphthoate + CoA + H(+)</text>
        <dbReference type="Rhea" id="RHEA:26309"/>
        <dbReference type="ChEBI" id="CHEBI:11173"/>
        <dbReference type="ChEBI" id="CHEBI:15377"/>
        <dbReference type="ChEBI" id="CHEBI:15378"/>
        <dbReference type="ChEBI" id="CHEBI:57287"/>
        <dbReference type="ChEBI" id="CHEBI:58897"/>
        <dbReference type="EC" id="3.1.2.28"/>
    </reaction>
</comment>
<comment type="pathway">
    <text evidence="1">Cofactor biosynthesis; phylloquinone biosynthesis.</text>
</comment>
<comment type="pathway">
    <text evidence="1">Quinol/quinone metabolism; 1,4-dihydroxy-2-naphthoate biosynthesis; 1,4-dihydroxy-2-naphthoate from chorismate: step 7/7.</text>
</comment>
<comment type="similarity">
    <text evidence="1">Belongs to the 4-hydroxybenzoyl-CoA thioesterase family. DHNA-CoA hydrolase subfamily.</text>
</comment>